<evidence type="ECO:0000255" key="1">
    <source>
        <dbReference type="HAMAP-Rule" id="MF_00301"/>
    </source>
</evidence>
<keyword id="KW-0028">Amino-acid biosynthesis</keyword>
<keyword id="KW-0067">ATP-binding</keyword>
<keyword id="KW-0418">Kinase</keyword>
<keyword id="KW-0547">Nucleotide-binding</keyword>
<keyword id="KW-1185">Reference proteome</keyword>
<keyword id="KW-0791">Threonine biosynthesis</keyword>
<keyword id="KW-0808">Transferase</keyword>
<protein>
    <recommendedName>
        <fullName evidence="1">Homoserine kinase</fullName>
        <shortName evidence="1">HK</shortName>
        <shortName evidence="1">HSK</shortName>
        <ecNumber evidence="1">2.7.1.39</ecNumber>
    </recommendedName>
</protein>
<accession>B8EPM3</accession>
<dbReference type="EC" id="2.7.1.39" evidence="1"/>
<dbReference type="EMBL" id="CP001280">
    <property type="protein sequence ID" value="ACK50228.1"/>
    <property type="molecule type" value="Genomic_DNA"/>
</dbReference>
<dbReference type="RefSeq" id="WP_012590298.1">
    <property type="nucleotide sequence ID" value="NC_011666.1"/>
</dbReference>
<dbReference type="SMR" id="B8EPM3"/>
<dbReference type="STRING" id="395965.Msil_1259"/>
<dbReference type="KEGG" id="msl:Msil_1259"/>
<dbReference type="eggNOG" id="COG2334">
    <property type="taxonomic scope" value="Bacteria"/>
</dbReference>
<dbReference type="HOGENOM" id="CLU_053300_0_0_5"/>
<dbReference type="OrthoDB" id="9777460at2"/>
<dbReference type="UniPathway" id="UPA00050">
    <property type="reaction ID" value="UER00064"/>
</dbReference>
<dbReference type="Proteomes" id="UP000002257">
    <property type="component" value="Chromosome"/>
</dbReference>
<dbReference type="GO" id="GO:0005524">
    <property type="term" value="F:ATP binding"/>
    <property type="evidence" value="ECO:0007669"/>
    <property type="project" value="UniProtKB-KW"/>
</dbReference>
<dbReference type="GO" id="GO:0004413">
    <property type="term" value="F:homoserine kinase activity"/>
    <property type="evidence" value="ECO:0007669"/>
    <property type="project" value="UniProtKB-UniRule"/>
</dbReference>
<dbReference type="GO" id="GO:0009088">
    <property type="term" value="P:threonine biosynthetic process"/>
    <property type="evidence" value="ECO:0007669"/>
    <property type="project" value="UniProtKB-UniRule"/>
</dbReference>
<dbReference type="CDD" id="cd05153">
    <property type="entry name" value="HomoserineK_II"/>
    <property type="match status" value="1"/>
</dbReference>
<dbReference type="Gene3D" id="3.90.1200.10">
    <property type="match status" value="1"/>
</dbReference>
<dbReference type="Gene3D" id="3.30.200.20">
    <property type="entry name" value="Phosphorylase Kinase, domain 1"/>
    <property type="match status" value="1"/>
</dbReference>
<dbReference type="HAMAP" id="MF_00301">
    <property type="entry name" value="Homoser_kinase_2"/>
    <property type="match status" value="1"/>
</dbReference>
<dbReference type="InterPro" id="IPR002575">
    <property type="entry name" value="Aminoglycoside_PTrfase"/>
</dbReference>
<dbReference type="InterPro" id="IPR005280">
    <property type="entry name" value="Homoserine_kinase_II"/>
</dbReference>
<dbReference type="InterPro" id="IPR011009">
    <property type="entry name" value="Kinase-like_dom_sf"/>
</dbReference>
<dbReference type="InterPro" id="IPR050249">
    <property type="entry name" value="Pseudomonas-type_ThrB"/>
</dbReference>
<dbReference type="NCBIfam" id="NF003558">
    <property type="entry name" value="PRK05231.1"/>
    <property type="match status" value="1"/>
</dbReference>
<dbReference type="NCBIfam" id="TIGR00938">
    <property type="entry name" value="thrB_alt"/>
    <property type="match status" value="1"/>
</dbReference>
<dbReference type="PANTHER" id="PTHR21064:SF6">
    <property type="entry name" value="AMINOGLYCOSIDE PHOSPHOTRANSFERASE DOMAIN-CONTAINING PROTEIN"/>
    <property type="match status" value="1"/>
</dbReference>
<dbReference type="PANTHER" id="PTHR21064">
    <property type="entry name" value="AMINOGLYCOSIDE PHOSPHOTRANSFERASE DOMAIN-CONTAINING PROTEIN-RELATED"/>
    <property type="match status" value="1"/>
</dbReference>
<dbReference type="Pfam" id="PF01636">
    <property type="entry name" value="APH"/>
    <property type="match status" value="1"/>
</dbReference>
<dbReference type="SUPFAM" id="SSF56112">
    <property type="entry name" value="Protein kinase-like (PK-like)"/>
    <property type="match status" value="1"/>
</dbReference>
<gene>
    <name evidence="1" type="primary">thrB</name>
    <name type="ordered locus">Msil_1259</name>
</gene>
<feature type="chain" id="PRO_1000196946" description="Homoserine kinase">
    <location>
        <begin position="1"/>
        <end position="321"/>
    </location>
</feature>
<proteinExistence type="inferred from homology"/>
<comment type="catalytic activity">
    <reaction evidence="1">
        <text>L-homoserine + ATP = O-phospho-L-homoserine + ADP + H(+)</text>
        <dbReference type="Rhea" id="RHEA:13985"/>
        <dbReference type="ChEBI" id="CHEBI:15378"/>
        <dbReference type="ChEBI" id="CHEBI:30616"/>
        <dbReference type="ChEBI" id="CHEBI:57476"/>
        <dbReference type="ChEBI" id="CHEBI:57590"/>
        <dbReference type="ChEBI" id="CHEBI:456216"/>
        <dbReference type="EC" id="2.7.1.39"/>
    </reaction>
</comment>
<comment type="pathway">
    <text evidence="1">Amino-acid biosynthesis; L-threonine biosynthesis; L-threonine from L-aspartate: step 4/5.</text>
</comment>
<comment type="similarity">
    <text evidence="1">Belongs to the pseudomonas-type ThrB family.</text>
</comment>
<name>KHSE_METSB</name>
<sequence>MAVYTEVSDADLAAFLEHYNLGRVRALKGIAEGVENSNFVLSTETGVYILTLYEKRVEEGSLPFFLSLLDHLAARGLNCPQPVRMRSDGALGRLAGRPAAIVTFLEGVCRNRPSIADCARLGAALAQLHLAAADFKGSRANALNLEAWPKLFAPIAFRADEVKAGLAATISAELKFLQANWPRDLPRGIIHADLFPDNVLFLGDEISGVIDFYFACVDDLSYDLAICLNAWCFEPGGAFNIDKGAAMFGAYASLRPLSAAEAKAIPTLARGAALRFALTRLVDWFNVPPGALVNPKNPLEYFAKLQMLQTIGDARELGVLI</sequence>
<organism>
    <name type="scientific">Methylocella silvestris (strain DSM 15510 / CIP 108128 / LMG 27833 / NCIMB 13906 / BL2)</name>
    <dbReference type="NCBI Taxonomy" id="395965"/>
    <lineage>
        <taxon>Bacteria</taxon>
        <taxon>Pseudomonadati</taxon>
        <taxon>Pseudomonadota</taxon>
        <taxon>Alphaproteobacteria</taxon>
        <taxon>Hyphomicrobiales</taxon>
        <taxon>Beijerinckiaceae</taxon>
        <taxon>Methylocella</taxon>
    </lineage>
</organism>
<reference key="1">
    <citation type="journal article" date="2010" name="J. Bacteriol.">
        <title>Complete genome sequence of the aerobic facultative methanotroph Methylocella silvestris BL2.</title>
        <authorList>
            <person name="Chen Y."/>
            <person name="Crombie A."/>
            <person name="Rahman M.T."/>
            <person name="Dedysh S.N."/>
            <person name="Liesack W."/>
            <person name="Stott M.B."/>
            <person name="Alam M."/>
            <person name="Theisen A.R."/>
            <person name="Murrell J.C."/>
            <person name="Dunfield P.F."/>
        </authorList>
    </citation>
    <scope>NUCLEOTIDE SEQUENCE [LARGE SCALE GENOMIC DNA]</scope>
    <source>
        <strain>DSM 15510 / CIP 108128 / LMG 27833 / NCIMB 13906 / BL2</strain>
    </source>
</reference>